<name>SYL_HAHCH</name>
<organism>
    <name type="scientific">Hahella chejuensis (strain KCTC 2396)</name>
    <dbReference type="NCBI Taxonomy" id="349521"/>
    <lineage>
        <taxon>Bacteria</taxon>
        <taxon>Pseudomonadati</taxon>
        <taxon>Pseudomonadota</taxon>
        <taxon>Gammaproteobacteria</taxon>
        <taxon>Oceanospirillales</taxon>
        <taxon>Hahellaceae</taxon>
        <taxon>Hahella</taxon>
    </lineage>
</organism>
<evidence type="ECO:0000255" key="1">
    <source>
        <dbReference type="HAMAP-Rule" id="MF_00049"/>
    </source>
</evidence>
<sequence length="861" mass="98380">MEELYHPKKVEQEAQKFWEETDAFKVDEEPGKEKFYCLSMFPYPSGKLHMGHVRNYTIGDVISRYQRMQGKNVLQPMGWDAFGLPAENAALKNNVAPAKWTYENIAYMKNQLKLLGFGYDWNRELATCRPEYYKWEQWFFTRLYEKGLVYKKMSTVNWDPVDETVLANEQVIDGKGWRSGAVVERREIPQWFIKITDYAEQLLNDLDKLENWPEQVKTMQRNWINKSEGVEFHFKLKDHDGDLQVYTTRPDTIMGVTYVAIAPQHPLALEAAASNPQLAKFLDECKNTKVAEADMATMEKRGMDTGFFVIHPLTNEPAPIWVANFVLMDYGSGAVMSVPGHDERDHEFALKYGLPIKQVISVIDADEVDIQEKAITEKGILVNSGEFTGMTSQEAFDAVAEKLTAMGIGEKKINYRLRDWGVSRQRYWGAPIPMMTQEDGTEVPVPLADLPVRLPEDVEMDGVKSPIKADPNWSKRSYNGQPATQETDTFDTFMESSWYYARFCCPNLESAMLDPAAANYWLPVDYYVGGIEHAILHLLYSRFFHKLLRDEGLVDSDEPFKKLLCQGMVIAETFYREDPSSKKTYFNPRDVRVELDTQGNSPKAFLIEDGQPVIIGPKEKMSKSKNNGVDPQELIDKYGADTVRLFTMFAAPPEQSLEWSESGVEGQHRFLRRLWKLVHTHVEKKGAAPLNVAELNETQRTLRRKTHETIKKMTDEFNHRMAINTGIAMVMELLNELSRFEDDSPQGLAVVQEALETAVLVLAPIVPHISHGLWRELGHEDVVMNAPWPQLDEKALEKDSIELVVQVNGKLRARIQAAASANKDELEKLAFDDENVQRFMEDKTVVKVIVVPGKLVNIVVK</sequence>
<gene>
    <name evidence="1" type="primary">leuS</name>
    <name type="ordered locus">HCH_05355</name>
</gene>
<accession>Q2SBE7</accession>
<proteinExistence type="inferred from homology"/>
<dbReference type="EC" id="6.1.1.4" evidence="1"/>
<dbReference type="EMBL" id="CP000155">
    <property type="protein sequence ID" value="ABC32027.1"/>
    <property type="molecule type" value="Genomic_DNA"/>
</dbReference>
<dbReference type="RefSeq" id="WP_011399091.1">
    <property type="nucleotide sequence ID" value="NC_007645.1"/>
</dbReference>
<dbReference type="SMR" id="Q2SBE7"/>
<dbReference type="STRING" id="349521.HCH_05355"/>
<dbReference type="KEGG" id="hch:HCH_05355"/>
<dbReference type="eggNOG" id="COG0495">
    <property type="taxonomic scope" value="Bacteria"/>
</dbReference>
<dbReference type="HOGENOM" id="CLU_004427_0_0_6"/>
<dbReference type="OrthoDB" id="9810365at2"/>
<dbReference type="Proteomes" id="UP000000238">
    <property type="component" value="Chromosome"/>
</dbReference>
<dbReference type="GO" id="GO:0005829">
    <property type="term" value="C:cytosol"/>
    <property type="evidence" value="ECO:0007669"/>
    <property type="project" value="TreeGrafter"/>
</dbReference>
<dbReference type="GO" id="GO:0002161">
    <property type="term" value="F:aminoacyl-tRNA deacylase activity"/>
    <property type="evidence" value="ECO:0007669"/>
    <property type="project" value="InterPro"/>
</dbReference>
<dbReference type="GO" id="GO:0005524">
    <property type="term" value="F:ATP binding"/>
    <property type="evidence" value="ECO:0007669"/>
    <property type="project" value="UniProtKB-UniRule"/>
</dbReference>
<dbReference type="GO" id="GO:0004823">
    <property type="term" value="F:leucine-tRNA ligase activity"/>
    <property type="evidence" value="ECO:0007669"/>
    <property type="project" value="UniProtKB-UniRule"/>
</dbReference>
<dbReference type="GO" id="GO:0006429">
    <property type="term" value="P:leucyl-tRNA aminoacylation"/>
    <property type="evidence" value="ECO:0007669"/>
    <property type="project" value="UniProtKB-UniRule"/>
</dbReference>
<dbReference type="CDD" id="cd07958">
    <property type="entry name" value="Anticodon_Ia_Leu_BEm"/>
    <property type="match status" value="1"/>
</dbReference>
<dbReference type="CDD" id="cd00812">
    <property type="entry name" value="LeuRS_core"/>
    <property type="match status" value="1"/>
</dbReference>
<dbReference type="FunFam" id="2.20.28.290:FF:000001">
    <property type="entry name" value="Leucine--tRNA ligase"/>
    <property type="match status" value="1"/>
</dbReference>
<dbReference type="FunFam" id="3.10.20.590:FF:000001">
    <property type="entry name" value="Leucine--tRNA ligase"/>
    <property type="match status" value="1"/>
</dbReference>
<dbReference type="FunFam" id="3.40.50.620:FF:000003">
    <property type="entry name" value="Leucine--tRNA ligase"/>
    <property type="match status" value="1"/>
</dbReference>
<dbReference type="FunFam" id="3.40.50.620:FF:000124">
    <property type="entry name" value="Leucine--tRNA ligase"/>
    <property type="match status" value="1"/>
</dbReference>
<dbReference type="FunFam" id="3.90.740.10:FF:000012">
    <property type="entry name" value="Leucine--tRNA ligase"/>
    <property type="match status" value="1"/>
</dbReference>
<dbReference type="FunFam" id="1.10.730.10:FF:000011">
    <property type="entry name" value="Leucine--tRNA ligase chloroplastic/mitochondrial"/>
    <property type="match status" value="1"/>
</dbReference>
<dbReference type="Gene3D" id="2.20.28.290">
    <property type="match status" value="1"/>
</dbReference>
<dbReference type="Gene3D" id="3.10.20.590">
    <property type="match status" value="1"/>
</dbReference>
<dbReference type="Gene3D" id="3.40.50.620">
    <property type="entry name" value="HUPs"/>
    <property type="match status" value="2"/>
</dbReference>
<dbReference type="Gene3D" id="1.10.730.10">
    <property type="entry name" value="Isoleucyl-tRNA Synthetase, Domain 1"/>
    <property type="match status" value="1"/>
</dbReference>
<dbReference type="HAMAP" id="MF_00049_B">
    <property type="entry name" value="Leu_tRNA_synth_B"/>
    <property type="match status" value="1"/>
</dbReference>
<dbReference type="InterPro" id="IPR001412">
    <property type="entry name" value="aa-tRNA-synth_I_CS"/>
</dbReference>
<dbReference type="InterPro" id="IPR002300">
    <property type="entry name" value="aa-tRNA-synth_Ia"/>
</dbReference>
<dbReference type="InterPro" id="IPR002302">
    <property type="entry name" value="Leu-tRNA-ligase"/>
</dbReference>
<dbReference type="InterPro" id="IPR025709">
    <property type="entry name" value="Leu_tRNA-synth_edit"/>
</dbReference>
<dbReference type="InterPro" id="IPR013155">
    <property type="entry name" value="M/V/L/I-tRNA-synth_anticd-bd"/>
</dbReference>
<dbReference type="InterPro" id="IPR015413">
    <property type="entry name" value="Methionyl/Leucyl_tRNA_Synth"/>
</dbReference>
<dbReference type="InterPro" id="IPR014729">
    <property type="entry name" value="Rossmann-like_a/b/a_fold"/>
</dbReference>
<dbReference type="InterPro" id="IPR009080">
    <property type="entry name" value="tRNAsynth_Ia_anticodon-bd"/>
</dbReference>
<dbReference type="InterPro" id="IPR009008">
    <property type="entry name" value="Val/Leu/Ile-tRNA-synth_edit"/>
</dbReference>
<dbReference type="NCBIfam" id="TIGR00396">
    <property type="entry name" value="leuS_bact"/>
    <property type="match status" value="1"/>
</dbReference>
<dbReference type="PANTHER" id="PTHR43740:SF2">
    <property type="entry name" value="LEUCINE--TRNA LIGASE, MITOCHONDRIAL"/>
    <property type="match status" value="1"/>
</dbReference>
<dbReference type="PANTHER" id="PTHR43740">
    <property type="entry name" value="LEUCYL-TRNA SYNTHETASE"/>
    <property type="match status" value="1"/>
</dbReference>
<dbReference type="Pfam" id="PF08264">
    <property type="entry name" value="Anticodon_1"/>
    <property type="match status" value="1"/>
</dbReference>
<dbReference type="Pfam" id="PF00133">
    <property type="entry name" value="tRNA-synt_1"/>
    <property type="match status" value="2"/>
</dbReference>
<dbReference type="Pfam" id="PF13603">
    <property type="entry name" value="tRNA-synt_1_2"/>
    <property type="match status" value="1"/>
</dbReference>
<dbReference type="Pfam" id="PF09334">
    <property type="entry name" value="tRNA-synt_1g"/>
    <property type="match status" value="1"/>
</dbReference>
<dbReference type="PRINTS" id="PR00985">
    <property type="entry name" value="TRNASYNTHLEU"/>
</dbReference>
<dbReference type="SUPFAM" id="SSF47323">
    <property type="entry name" value="Anticodon-binding domain of a subclass of class I aminoacyl-tRNA synthetases"/>
    <property type="match status" value="1"/>
</dbReference>
<dbReference type="SUPFAM" id="SSF52374">
    <property type="entry name" value="Nucleotidylyl transferase"/>
    <property type="match status" value="1"/>
</dbReference>
<dbReference type="SUPFAM" id="SSF50677">
    <property type="entry name" value="ValRS/IleRS/LeuRS editing domain"/>
    <property type="match status" value="1"/>
</dbReference>
<dbReference type="PROSITE" id="PS00178">
    <property type="entry name" value="AA_TRNA_LIGASE_I"/>
    <property type="match status" value="1"/>
</dbReference>
<keyword id="KW-0030">Aminoacyl-tRNA synthetase</keyword>
<keyword id="KW-0067">ATP-binding</keyword>
<keyword id="KW-0963">Cytoplasm</keyword>
<keyword id="KW-0436">Ligase</keyword>
<keyword id="KW-0547">Nucleotide-binding</keyword>
<keyword id="KW-0648">Protein biosynthesis</keyword>
<keyword id="KW-1185">Reference proteome</keyword>
<comment type="catalytic activity">
    <reaction evidence="1">
        <text>tRNA(Leu) + L-leucine + ATP = L-leucyl-tRNA(Leu) + AMP + diphosphate</text>
        <dbReference type="Rhea" id="RHEA:11688"/>
        <dbReference type="Rhea" id="RHEA-COMP:9613"/>
        <dbReference type="Rhea" id="RHEA-COMP:9622"/>
        <dbReference type="ChEBI" id="CHEBI:30616"/>
        <dbReference type="ChEBI" id="CHEBI:33019"/>
        <dbReference type="ChEBI" id="CHEBI:57427"/>
        <dbReference type="ChEBI" id="CHEBI:78442"/>
        <dbReference type="ChEBI" id="CHEBI:78494"/>
        <dbReference type="ChEBI" id="CHEBI:456215"/>
        <dbReference type="EC" id="6.1.1.4"/>
    </reaction>
</comment>
<comment type="subcellular location">
    <subcellularLocation>
        <location evidence="1">Cytoplasm</location>
    </subcellularLocation>
</comment>
<comment type="similarity">
    <text evidence="1">Belongs to the class-I aminoacyl-tRNA synthetase family.</text>
</comment>
<feature type="chain" id="PRO_1000009351" description="Leucine--tRNA ligase">
    <location>
        <begin position="1"/>
        <end position="861"/>
    </location>
</feature>
<feature type="short sequence motif" description="'HIGH' region">
    <location>
        <begin position="42"/>
        <end position="52"/>
    </location>
</feature>
<feature type="short sequence motif" description="'KMSKS' region">
    <location>
        <begin position="620"/>
        <end position="624"/>
    </location>
</feature>
<feature type="binding site" evidence="1">
    <location>
        <position position="623"/>
    </location>
    <ligand>
        <name>ATP</name>
        <dbReference type="ChEBI" id="CHEBI:30616"/>
    </ligand>
</feature>
<reference key="1">
    <citation type="journal article" date="2005" name="Nucleic Acids Res.">
        <title>Genomic blueprint of Hahella chejuensis, a marine microbe producing an algicidal agent.</title>
        <authorList>
            <person name="Jeong H."/>
            <person name="Yim J.H."/>
            <person name="Lee C."/>
            <person name="Choi S.-H."/>
            <person name="Park Y.K."/>
            <person name="Yoon S.H."/>
            <person name="Hur C.-G."/>
            <person name="Kang H.-Y."/>
            <person name="Kim D."/>
            <person name="Lee H.H."/>
            <person name="Park K.H."/>
            <person name="Park S.-H."/>
            <person name="Park H.-S."/>
            <person name="Lee H.K."/>
            <person name="Oh T.K."/>
            <person name="Kim J.F."/>
        </authorList>
    </citation>
    <scope>NUCLEOTIDE SEQUENCE [LARGE SCALE GENOMIC DNA]</scope>
    <source>
        <strain>KCTC 2396</strain>
    </source>
</reference>
<protein>
    <recommendedName>
        <fullName evidence="1">Leucine--tRNA ligase</fullName>
        <ecNumber evidence="1">6.1.1.4</ecNumber>
    </recommendedName>
    <alternativeName>
        <fullName evidence="1">Leucyl-tRNA synthetase</fullName>
        <shortName evidence="1">LeuRS</shortName>
    </alternativeName>
</protein>